<reference key="1">
    <citation type="journal article" date="2003" name="FEMS Microbiol. Lett.">
        <title>The tyrosine decarboxylase operon of Lactobacillus brevis IOEB 9809: characterization and conservation in tyramine-producing bacteria.</title>
        <authorList>
            <person name="Lucas P."/>
            <person name="Landete J."/>
            <person name="Coton M."/>
            <person name="Coton E."/>
            <person name="Lonvaud-Funel A."/>
        </authorList>
    </citation>
    <scope>NUCLEOTIDE SEQUENCE [GENOMIC DNA]</scope>
    <source>
        <strain>IOEB 9809</strain>
    </source>
</reference>
<organism>
    <name type="scientific">Levilactobacillus brevis</name>
    <name type="common">Lactobacillus brevis</name>
    <dbReference type="NCBI Taxonomy" id="1580"/>
    <lineage>
        <taxon>Bacteria</taxon>
        <taxon>Bacillati</taxon>
        <taxon>Bacillota</taxon>
        <taxon>Bacilli</taxon>
        <taxon>Lactobacillales</taxon>
        <taxon>Lactobacillaceae</taxon>
        <taxon>Levilactobacillus</taxon>
    </lineage>
</organism>
<protein>
    <recommendedName>
        <fullName evidence="1">Tyrosine--tRNA ligase</fullName>
        <ecNumber evidence="1">6.1.1.1</ecNumber>
    </recommendedName>
    <alternativeName>
        <fullName evidence="1">Tyrosyl-tRNA synthetase</fullName>
        <shortName evidence="1">TyrRS</shortName>
    </alternativeName>
</protein>
<accession>Q7B9Y9</accession>
<comment type="function">
    <text evidence="1">Catalyzes the attachment of tyrosine to tRNA(Tyr) in a two-step reaction: tyrosine is first activated by ATP to form Tyr-AMP and then transferred to the acceptor end of tRNA(Tyr).</text>
</comment>
<comment type="catalytic activity">
    <reaction evidence="1">
        <text>tRNA(Tyr) + L-tyrosine + ATP = L-tyrosyl-tRNA(Tyr) + AMP + diphosphate + H(+)</text>
        <dbReference type="Rhea" id="RHEA:10220"/>
        <dbReference type="Rhea" id="RHEA-COMP:9706"/>
        <dbReference type="Rhea" id="RHEA-COMP:9707"/>
        <dbReference type="ChEBI" id="CHEBI:15378"/>
        <dbReference type="ChEBI" id="CHEBI:30616"/>
        <dbReference type="ChEBI" id="CHEBI:33019"/>
        <dbReference type="ChEBI" id="CHEBI:58315"/>
        <dbReference type="ChEBI" id="CHEBI:78442"/>
        <dbReference type="ChEBI" id="CHEBI:78536"/>
        <dbReference type="ChEBI" id="CHEBI:456215"/>
        <dbReference type="EC" id="6.1.1.1"/>
    </reaction>
</comment>
<comment type="subunit">
    <text evidence="1">Homodimer.</text>
</comment>
<comment type="subcellular location">
    <subcellularLocation>
        <location evidence="1">Cytoplasm</location>
    </subcellularLocation>
</comment>
<comment type="similarity">
    <text evidence="1">Belongs to the class-I aminoacyl-tRNA synthetase family. TyrS type 1 subfamily.</text>
</comment>
<sequence length="418" mass="47080">MNIIDELTWRGAINQQTDAEGLKKLTSEKKISLYCGVDPTGDSMHIGHLIPFMMMKRFELAGHHPYILIGGATGSIGDPSGRKTERQLQTMDKVQHNVKALSRQMQRLFGGDSNVTMVNNYDWLSKISLLDFLRDYGKLVNINTMLAKDIVASRLDTGISFTEFTYQILQSVDFLTLHNDHNIQLQIGGADQWGNITAGIDLIHKIKGADEAVYGLTIPLMLKADGTKFGKTAGGAIWLDADKTSPYEFYQFWLNQDDRDVIRYLKFFTFLGQDEINQLAAAVEDEPEKRLAQRRLAEEVTRFVHGEEALESAQHISEILFSGDIQRLTLTEVQEAFEKVPNVSINSEPTNIVELLTETAIEPSRRQAREDITNGAITINGERCTDTDAQLNPKTNFSGKFMVIRRGKKNYFLAKVKD</sequence>
<evidence type="ECO:0000255" key="1">
    <source>
        <dbReference type="HAMAP-Rule" id="MF_02006"/>
    </source>
</evidence>
<feature type="chain" id="PRO_0000234716" description="Tyrosine--tRNA ligase">
    <location>
        <begin position="1"/>
        <end position="418"/>
    </location>
</feature>
<feature type="domain" description="S4 RNA-binding" evidence="1">
    <location>
        <begin position="350"/>
        <end position="417"/>
    </location>
</feature>
<feature type="short sequence motif" description="'HIGH' region">
    <location>
        <begin position="39"/>
        <end position="48"/>
    </location>
</feature>
<feature type="short sequence motif" description="'KMSKS' region">
    <location>
        <begin position="228"/>
        <end position="232"/>
    </location>
</feature>
<feature type="binding site" evidence="1">
    <location>
        <position position="34"/>
    </location>
    <ligand>
        <name>L-tyrosine</name>
        <dbReference type="ChEBI" id="CHEBI:58315"/>
    </ligand>
</feature>
<feature type="binding site" evidence="1">
    <location>
        <position position="166"/>
    </location>
    <ligand>
        <name>L-tyrosine</name>
        <dbReference type="ChEBI" id="CHEBI:58315"/>
    </ligand>
</feature>
<feature type="binding site" evidence="1">
    <location>
        <position position="170"/>
    </location>
    <ligand>
        <name>L-tyrosine</name>
        <dbReference type="ChEBI" id="CHEBI:58315"/>
    </ligand>
</feature>
<feature type="binding site" evidence="1">
    <location>
        <position position="231"/>
    </location>
    <ligand>
        <name>ATP</name>
        <dbReference type="ChEBI" id="CHEBI:30616"/>
    </ligand>
</feature>
<dbReference type="EC" id="6.1.1.1" evidence="1"/>
<dbReference type="EMBL" id="AF446085">
    <property type="protein sequence ID" value="AAQ83557.1"/>
    <property type="molecule type" value="Genomic_DNA"/>
</dbReference>
<dbReference type="RefSeq" id="WP_011668785.1">
    <property type="nucleotide sequence ID" value="NZ_VDMV01000023.1"/>
</dbReference>
<dbReference type="SMR" id="Q7B9Y9"/>
<dbReference type="PATRIC" id="fig|1580.58.peg.888"/>
<dbReference type="OMA" id="PPFLFWN"/>
<dbReference type="GO" id="GO:0005829">
    <property type="term" value="C:cytosol"/>
    <property type="evidence" value="ECO:0007669"/>
    <property type="project" value="TreeGrafter"/>
</dbReference>
<dbReference type="GO" id="GO:0005524">
    <property type="term" value="F:ATP binding"/>
    <property type="evidence" value="ECO:0007669"/>
    <property type="project" value="UniProtKB-UniRule"/>
</dbReference>
<dbReference type="GO" id="GO:0003723">
    <property type="term" value="F:RNA binding"/>
    <property type="evidence" value="ECO:0007669"/>
    <property type="project" value="UniProtKB-KW"/>
</dbReference>
<dbReference type="GO" id="GO:0004831">
    <property type="term" value="F:tyrosine-tRNA ligase activity"/>
    <property type="evidence" value="ECO:0007669"/>
    <property type="project" value="UniProtKB-UniRule"/>
</dbReference>
<dbReference type="GO" id="GO:0006437">
    <property type="term" value="P:tyrosyl-tRNA aminoacylation"/>
    <property type="evidence" value="ECO:0007669"/>
    <property type="project" value="UniProtKB-UniRule"/>
</dbReference>
<dbReference type="CDD" id="cd00165">
    <property type="entry name" value="S4"/>
    <property type="match status" value="1"/>
</dbReference>
<dbReference type="CDD" id="cd00805">
    <property type="entry name" value="TyrRS_core"/>
    <property type="match status" value="1"/>
</dbReference>
<dbReference type="FunFam" id="1.10.240.10:FF:000001">
    <property type="entry name" value="Tyrosine--tRNA ligase"/>
    <property type="match status" value="1"/>
</dbReference>
<dbReference type="FunFam" id="3.40.50.620:FF:000008">
    <property type="entry name" value="Tyrosine--tRNA ligase"/>
    <property type="match status" value="1"/>
</dbReference>
<dbReference type="Gene3D" id="3.40.50.620">
    <property type="entry name" value="HUPs"/>
    <property type="match status" value="1"/>
</dbReference>
<dbReference type="Gene3D" id="3.10.290.10">
    <property type="entry name" value="RNA-binding S4 domain"/>
    <property type="match status" value="1"/>
</dbReference>
<dbReference type="Gene3D" id="1.10.240.10">
    <property type="entry name" value="Tyrosyl-Transfer RNA Synthetase"/>
    <property type="match status" value="1"/>
</dbReference>
<dbReference type="HAMAP" id="MF_02006">
    <property type="entry name" value="Tyr_tRNA_synth_type1"/>
    <property type="match status" value="1"/>
</dbReference>
<dbReference type="InterPro" id="IPR001412">
    <property type="entry name" value="aa-tRNA-synth_I_CS"/>
</dbReference>
<dbReference type="InterPro" id="IPR002305">
    <property type="entry name" value="aa-tRNA-synth_Ic"/>
</dbReference>
<dbReference type="InterPro" id="IPR014729">
    <property type="entry name" value="Rossmann-like_a/b/a_fold"/>
</dbReference>
<dbReference type="InterPro" id="IPR002942">
    <property type="entry name" value="S4_RNA-bd"/>
</dbReference>
<dbReference type="InterPro" id="IPR036986">
    <property type="entry name" value="S4_RNA-bd_sf"/>
</dbReference>
<dbReference type="InterPro" id="IPR054608">
    <property type="entry name" value="SYY-like_C"/>
</dbReference>
<dbReference type="InterPro" id="IPR002307">
    <property type="entry name" value="Tyr-tRNA-ligase"/>
</dbReference>
<dbReference type="InterPro" id="IPR024088">
    <property type="entry name" value="Tyr-tRNA-ligase_bac-type"/>
</dbReference>
<dbReference type="InterPro" id="IPR024107">
    <property type="entry name" value="Tyr-tRNA-ligase_bac_1"/>
</dbReference>
<dbReference type="NCBIfam" id="TIGR00234">
    <property type="entry name" value="tyrS"/>
    <property type="match status" value="1"/>
</dbReference>
<dbReference type="PANTHER" id="PTHR11766:SF0">
    <property type="entry name" value="TYROSINE--TRNA LIGASE, MITOCHONDRIAL"/>
    <property type="match status" value="1"/>
</dbReference>
<dbReference type="PANTHER" id="PTHR11766">
    <property type="entry name" value="TYROSYL-TRNA SYNTHETASE"/>
    <property type="match status" value="1"/>
</dbReference>
<dbReference type="Pfam" id="PF22421">
    <property type="entry name" value="SYY_C-terminal"/>
    <property type="match status" value="1"/>
</dbReference>
<dbReference type="Pfam" id="PF00579">
    <property type="entry name" value="tRNA-synt_1b"/>
    <property type="match status" value="1"/>
</dbReference>
<dbReference type="PRINTS" id="PR01040">
    <property type="entry name" value="TRNASYNTHTYR"/>
</dbReference>
<dbReference type="SMART" id="SM00363">
    <property type="entry name" value="S4"/>
    <property type="match status" value="1"/>
</dbReference>
<dbReference type="SUPFAM" id="SSF55174">
    <property type="entry name" value="Alpha-L RNA-binding motif"/>
    <property type="match status" value="1"/>
</dbReference>
<dbReference type="SUPFAM" id="SSF52374">
    <property type="entry name" value="Nucleotidylyl transferase"/>
    <property type="match status" value="1"/>
</dbReference>
<dbReference type="PROSITE" id="PS00178">
    <property type="entry name" value="AA_TRNA_LIGASE_I"/>
    <property type="match status" value="1"/>
</dbReference>
<dbReference type="PROSITE" id="PS50889">
    <property type="entry name" value="S4"/>
    <property type="match status" value="1"/>
</dbReference>
<name>SYY_LEVBR</name>
<keyword id="KW-0030">Aminoacyl-tRNA synthetase</keyword>
<keyword id="KW-0067">ATP-binding</keyword>
<keyword id="KW-0963">Cytoplasm</keyword>
<keyword id="KW-0436">Ligase</keyword>
<keyword id="KW-0547">Nucleotide-binding</keyword>
<keyword id="KW-0648">Protein biosynthesis</keyword>
<keyword id="KW-0694">RNA-binding</keyword>
<proteinExistence type="inferred from homology"/>
<gene>
    <name evidence="1" type="primary">tyrS</name>
</gene>